<feature type="chain" id="PRO_1000129688" description="Co-chaperonin GroES">
    <location>
        <begin position="1"/>
        <end position="95"/>
    </location>
</feature>
<accession>B4SEN0</accession>
<reference key="1">
    <citation type="submission" date="2008-06" db="EMBL/GenBank/DDBJ databases">
        <title>Complete sequence of Pelodictyon phaeoclathratiforme BU-1.</title>
        <authorList>
            <consortium name="US DOE Joint Genome Institute"/>
            <person name="Lucas S."/>
            <person name="Copeland A."/>
            <person name="Lapidus A."/>
            <person name="Glavina del Rio T."/>
            <person name="Dalin E."/>
            <person name="Tice H."/>
            <person name="Bruce D."/>
            <person name="Goodwin L."/>
            <person name="Pitluck S."/>
            <person name="Schmutz J."/>
            <person name="Larimer F."/>
            <person name="Land M."/>
            <person name="Hauser L."/>
            <person name="Kyrpides N."/>
            <person name="Mikhailova N."/>
            <person name="Liu Z."/>
            <person name="Li T."/>
            <person name="Zhao F."/>
            <person name="Overmann J."/>
            <person name="Bryant D.A."/>
            <person name="Richardson P."/>
        </authorList>
    </citation>
    <scope>NUCLEOTIDE SEQUENCE [LARGE SCALE GENOMIC DNA]</scope>
    <source>
        <strain>DSM 5477 / BU-1</strain>
    </source>
</reference>
<sequence>MNLKPLSDRVIVKPAAAEEKTKGGLYIPDTGKEKPQYGEVVAVGAGKIADNGQLLEMQVKVGSKVLYGKYSGTEVSVEGEDYLIMRESDIFAILG</sequence>
<dbReference type="EMBL" id="CP001110">
    <property type="protein sequence ID" value="ACF43122.1"/>
    <property type="molecule type" value="Genomic_DNA"/>
</dbReference>
<dbReference type="RefSeq" id="WP_012507617.1">
    <property type="nucleotide sequence ID" value="NC_011060.1"/>
</dbReference>
<dbReference type="SMR" id="B4SEN0"/>
<dbReference type="STRING" id="324925.Ppha_0833"/>
<dbReference type="KEGG" id="pph:Ppha_0833"/>
<dbReference type="eggNOG" id="COG0234">
    <property type="taxonomic scope" value="Bacteria"/>
</dbReference>
<dbReference type="HOGENOM" id="CLU_132825_2_0_10"/>
<dbReference type="OrthoDB" id="9806791at2"/>
<dbReference type="Proteomes" id="UP000002724">
    <property type="component" value="Chromosome"/>
</dbReference>
<dbReference type="GO" id="GO:0005737">
    <property type="term" value="C:cytoplasm"/>
    <property type="evidence" value="ECO:0007669"/>
    <property type="project" value="UniProtKB-SubCell"/>
</dbReference>
<dbReference type="GO" id="GO:0005524">
    <property type="term" value="F:ATP binding"/>
    <property type="evidence" value="ECO:0007669"/>
    <property type="project" value="InterPro"/>
</dbReference>
<dbReference type="GO" id="GO:0046872">
    <property type="term" value="F:metal ion binding"/>
    <property type="evidence" value="ECO:0007669"/>
    <property type="project" value="TreeGrafter"/>
</dbReference>
<dbReference type="GO" id="GO:0044183">
    <property type="term" value="F:protein folding chaperone"/>
    <property type="evidence" value="ECO:0007669"/>
    <property type="project" value="InterPro"/>
</dbReference>
<dbReference type="GO" id="GO:0051087">
    <property type="term" value="F:protein-folding chaperone binding"/>
    <property type="evidence" value="ECO:0007669"/>
    <property type="project" value="TreeGrafter"/>
</dbReference>
<dbReference type="GO" id="GO:0051082">
    <property type="term" value="F:unfolded protein binding"/>
    <property type="evidence" value="ECO:0007669"/>
    <property type="project" value="TreeGrafter"/>
</dbReference>
<dbReference type="GO" id="GO:0051085">
    <property type="term" value="P:chaperone cofactor-dependent protein refolding"/>
    <property type="evidence" value="ECO:0007669"/>
    <property type="project" value="TreeGrafter"/>
</dbReference>
<dbReference type="CDD" id="cd00320">
    <property type="entry name" value="cpn10"/>
    <property type="match status" value="1"/>
</dbReference>
<dbReference type="FunFam" id="2.30.33.40:FF:000001">
    <property type="entry name" value="10 kDa chaperonin"/>
    <property type="match status" value="1"/>
</dbReference>
<dbReference type="Gene3D" id="2.30.33.40">
    <property type="entry name" value="GroES chaperonin"/>
    <property type="match status" value="1"/>
</dbReference>
<dbReference type="HAMAP" id="MF_00580">
    <property type="entry name" value="CH10"/>
    <property type="match status" value="1"/>
</dbReference>
<dbReference type="InterPro" id="IPR020818">
    <property type="entry name" value="Chaperonin_GroES"/>
</dbReference>
<dbReference type="InterPro" id="IPR037124">
    <property type="entry name" value="Chaperonin_GroES_sf"/>
</dbReference>
<dbReference type="InterPro" id="IPR018369">
    <property type="entry name" value="Chaprnonin_Cpn10_CS"/>
</dbReference>
<dbReference type="InterPro" id="IPR011032">
    <property type="entry name" value="GroES-like_sf"/>
</dbReference>
<dbReference type="NCBIfam" id="NF001527">
    <property type="entry name" value="PRK00364.1-2"/>
    <property type="match status" value="1"/>
</dbReference>
<dbReference type="NCBIfam" id="NF001531">
    <property type="entry name" value="PRK00364.2-2"/>
    <property type="match status" value="1"/>
</dbReference>
<dbReference type="NCBIfam" id="NF001533">
    <property type="entry name" value="PRK00364.2-4"/>
    <property type="match status" value="1"/>
</dbReference>
<dbReference type="NCBIfam" id="NF001534">
    <property type="entry name" value="PRK00364.2-5"/>
    <property type="match status" value="1"/>
</dbReference>
<dbReference type="PANTHER" id="PTHR10772">
    <property type="entry name" value="10 KDA HEAT SHOCK PROTEIN"/>
    <property type="match status" value="1"/>
</dbReference>
<dbReference type="PANTHER" id="PTHR10772:SF58">
    <property type="entry name" value="CO-CHAPERONIN GROES"/>
    <property type="match status" value="1"/>
</dbReference>
<dbReference type="Pfam" id="PF00166">
    <property type="entry name" value="Cpn10"/>
    <property type="match status" value="1"/>
</dbReference>
<dbReference type="PRINTS" id="PR00297">
    <property type="entry name" value="CHAPERONIN10"/>
</dbReference>
<dbReference type="SMART" id="SM00883">
    <property type="entry name" value="Cpn10"/>
    <property type="match status" value="1"/>
</dbReference>
<dbReference type="SUPFAM" id="SSF50129">
    <property type="entry name" value="GroES-like"/>
    <property type="match status" value="1"/>
</dbReference>
<dbReference type="PROSITE" id="PS00681">
    <property type="entry name" value="CHAPERONINS_CPN10"/>
    <property type="match status" value="1"/>
</dbReference>
<keyword id="KW-0143">Chaperone</keyword>
<keyword id="KW-0963">Cytoplasm</keyword>
<keyword id="KW-1185">Reference proteome</keyword>
<proteinExistence type="inferred from homology"/>
<evidence type="ECO:0000255" key="1">
    <source>
        <dbReference type="HAMAP-Rule" id="MF_00580"/>
    </source>
</evidence>
<comment type="function">
    <text evidence="1">Together with the chaperonin GroEL, plays an essential role in assisting protein folding. The GroEL-GroES system forms a nano-cage that allows encapsulation of the non-native substrate proteins and provides a physical environment optimized to promote and accelerate protein folding. GroES binds to the apical surface of the GroEL ring, thereby capping the opening of the GroEL channel.</text>
</comment>
<comment type="subunit">
    <text evidence="1">Heptamer of 7 subunits arranged in a ring. Interacts with the chaperonin GroEL.</text>
</comment>
<comment type="subcellular location">
    <subcellularLocation>
        <location evidence="1">Cytoplasm</location>
    </subcellularLocation>
</comment>
<comment type="similarity">
    <text evidence="1">Belongs to the GroES chaperonin family.</text>
</comment>
<protein>
    <recommendedName>
        <fullName evidence="1">Co-chaperonin GroES</fullName>
    </recommendedName>
    <alternativeName>
        <fullName evidence="1">10 kDa chaperonin</fullName>
    </alternativeName>
    <alternativeName>
        <fullName evidence="1">Chaperonin-10</fullName>
        <shortName evidence="1">Cpn10</shortName>
    </alternativeName>
</protein>
<organism>
    <name type="scientific">Pelodictyon phaeoclathratiforme (strain DSM 5477 / BU-1)</name>
    <dbReference type="NCBI Taxonomy" id="324925"/>
    <lineage>
        <taxon>Bacteria</taxon>
        <taxon>Pseudomonadati</taxon>
        <taxon>Chlorobiota</taxon>
        <taxon>Chlorobiia</taxon>
        <taxon>Chlorobiales</taxon>
        <taxon>Chlorobiaceae</taxon>
        <taxon>Chlorobium/Pelodictyon group</taxon>
        <taxon>Pelodictyon</taxon>
    </lineage>
</organism>
<name>CH10_PELPB</name>
<gene>
    <name evidence="1" type="primary">groES</name>
    <name evidence="1" type="synonym">groS</name>
    <name type="ordered locus">Ppha_0833</name>
</gene>